<feature type="chain" id="PRO_1000047683" description="Aminomethyltransferase">
    <location>
        <begin position="1"/>
        <end position="371"/>
    </location>
</feature>
<name>GCST_NITOC</name>
<keyword id="KW-0032">Aminotransferase</keyword>
<keyword id="KW-1185">Reference proteome</keyword>
<keyword id="KW-0808">Transferase</keyword>
<gene>
    <name evidence="1" type="primary">gcvT</name>
    <name type="ordered locus">Noc_0500</name>
</gene>
<proteinExistence type="inferred from homology"/>
<organism>
    <name type="scientific">Nitrosococcus oceani (strain ATCC 19707 / BCRC 17464 / JCM 30415 / NCIMB 11848 / C-107)</name>
    <dbReference type="NCBI Taxonomy" id="323261"/>
    <lineage>
        <taxon>Bacteria</taxon>
        <taxon>Pseudomonadati</taxon>
        <taxon>Pseudomonadota</taxon>
        <taxon>Gammaproteobacteria</taxon>
        <taxon>Chromatiales</taxon>
        <taxon>Chromatiaceae</taxon>
        <taxon>Nitrosococcus</taxon>
    </lineage>
</organism>
<protein>
    <recommendedName>
        <fullName evidence="1">Aminomethyltransferase</fullName>
        <ecNumber evidence="1">2.1.2.10</ecNumber>
    </recommendedName>
    <alternativeName>
        <fullName evidence="1">Glycine cleavage system T protein</fullName>
    </alternativeName>
</protein>
<sequence>MGKHTAIFDLHRSAGARLVDFAGWDMPLHYGSQVAEHQAVRQGVGIFDVSHMTVIELKGEKVRPFLHQLLANNVDRLTVPGTALYSCMLNTEGGVIDDLIVYLMAEQEFRVVSNAGTRDKVLAWIESHAAPFKVQVEERPELAMIAVQGPEARAQVHGQLPESLKEKVVNLKRFQATWEEGLFVARTGYTGEDGYELLLSGSQAQDWWRRLQAGGAKPCGLGARDTLRLEAGMCLYGADMDETTTPLESGLGWTVAWKPPERDFIGRAVLEAQQAAGCPHQQVGLLLQGKGLMRNGQTITTNLGEGVVTSGGFSPSLERSIALARVPVGADGPCEVQIRGRAVPAAMVKPPFVRNGRACVPAELMEPIEVS</sequence>
<accession>Q3JDS3</accession>
<dbReference type="EC" id="2.1.2.10" evidence="1"/>
<dbReference type="EMBL" id="CP000127">
    <property type="protein sequence ID" value="ABA57023.1"/>
    <property type="molecule type" value="Genomic_DNA"/>
</dbReference>
<dbReference type="RefSeq" id="WP_011330368.1">
    <property type="nucleotide sequence ID" value="NC_007484.1"/>
</dbReference>
<dbReference type="SMR" id="Q3JDS3"/>
<dbReference type="FunCoup" id="Q3JDS3">
    <property type="interactions" value="535"/>
</dbReference>
<dbReference type="STRING" id="323261.Noc_0500"/>
<dbReference type="KEGG" id="noc:Noc_0500"/>
<dbReference type="eggNOG" id="COG0404">
    <property type="taxonomic scope" value="Bacteria"/>
</dbReference>
<dbReference type="HOGENOM" id="CLU_007884_10_2_6"/>
<dbReference type="InParanoid" id="Q3JDS3"/>
<dbReference type="Proteomes" id="UP000006838">
    <property type="component" value="Chromosome"/>
</dbReference>
<dbReference type="GO" id="GO:0005829">
    <property type="term" value="C:cytosol"/>
    <property type="evidence" value="ECO:0007669"/>
    <property type="project" value="TreeGrafter"/>
</dbReference>
<dbReference type="GO" id="GO:0005960">
    <property type="term" value="C:glycine cleavage complex"/>
    <property type="evidence" value="ECO:0007669"/>
    <property type="project" value="InterPro"/>
</dbReference>
<dbReference type="GO" id="GO:0004047">
    <property type="term" value="F:aminomethyltransferase activity"/>
    <property type="evidence" value="ECO:0007669"/>
    <property type="project" value="UniProtKB-UniRule"/>
</dbReference>
<dbReference type="GO" id="GO:0008483">
    <property type="term" value="F:transaminase activity"/>
    <property type="evidence" value="ECO:0007669"/>
    <property type="project" value="UniProtKB-KW"/>
</dbReference>
<dbReference type="GO" id="GO:0019464">
    <property type="term" value="P:glycine decarboxylation via glycine cleavage system"/>
    <property type="evidence" value="ECO:0007669"/>
    <property type="project" value="UniProtKB-UniRule"/>
</dbReference>
<dbReference type="FunFam" id="3.30.70.1400:FF:000001">
    <property type="entry name" value="Aminomethyltransferase"/>
    <property type="match status" value="1"/>
</dbReference>
<dbReference type="FunFam" id="4.10.1250.10:FF:000001">
    <property type="entry name" value="Aminomethyltransferase"/>
    <property type="match status" value="1"/>
</dbReference>
<dbReference type="Gene3D" id="2.40.30.110">
    <property type="entry name" value="Aminomethyltransferase beta-barrel domains"/>
    <property type="match status" value="1"/>
</dbReference>
<dbReference type="Gene3D" id="3.30.70.1400">
    <property type="entry name" value="Aminomethyltransferase beta-barrel domains"/>
    <property type="match status" value="1"/>
</dbReference>
<dbReference type="Gene3D" id="4.10.1250.10">
    <property type="entry name" value="Aminomethyltransferase fragment"/>
    <property type="match status" value="1"/>
</dbReference>
<dbReference type="Gene3D" id="3.30.1360.120">
    <property type="entry name" value="Probable tRNA modification gtpase trme, domain 1"/>
    <property type="match status" value="1"/>
</dbReference>
<dbReference type="HAMAP" id="MF_00259">
    <property type="entry name" value="GcvT"/>
    <property type="match status" value="1"/>
</dbReference>
<dbReference type="InterPro" id="IPR006223">
    <property type="entry name" value="GCS_T"/>
</dbReference>
<dbReference type="InterPro" id="IPR022903">
    <property type="entry name" value="GCS_T_bac"/>
</dbReference>
<dbReference type="InterPro" id="IPR013977">
    <property type="entry name" value="GCST_C"/>
</dbReference>
<dbReference type="InterPro" id="IPR006222">
    <property type="entry name" value="GCV_T_N"/>
</dbReference>
<dbReference type="InterPro" id="IPR028896">
    <property type="entry name" value="GcvT/YgfZ/DmdA"/>
</dbReference>
<dbReference type="InterPro" id="IPR029043">
    <property type="entry name" value="GcvT/YgfZ_C"/>
</dbReference>
<dbReference type="InterPro" id="IPR027266">
    <property type="entry name" value="TrmE/GcvT_dom1"/>
</dbReference>
<dbReference type="NCBIfam" id="TIGR00528">
    <property type="entry name" value="gcvT"/>
    <property type="match status" value="1"/>
</dbReference>
<dbReference type="NCBIfam" id="NF001567">
    <property type="entry name" value="PRK00389.1"/>
    <property type="match status" value="1"/>
</dbReference>
<dbReference type="PANTHER" id="PTHR43757">
    <property type="entry name" value="AMINOMETHYLTRANSFERASE"/>
    <property type="match status" value="1"/>
</dbReference>
<dbReference type="PANTHER" id="PTHR43757:SF2">
    <property type="entry name" value="AMINOMETHYLTRANSFERASE, MITOCHONDRIAL"/>
    <property type="match status" value="1"/>
</dbReference>
<dbReference type="Pfam" id="PF01571">
    <property type="entry name" value="GCV_T"/>
    <property type="match status" value="1"/>
</dbReference>
<dbReference type="Pfam" id="PF08669">
    <property type="entry name" value="GCV_T_C"/>
    <property type="match status" value="1"/>
</dbReference>
<dbReference type="PIRSF" id="PIRSF006487">
    <property type="entry name" value="GcvT"/>
    <property type="match status" value="1"/>
</dbReference>
<dbReference type="SUPFAM" id="SSF101790">
    <property type="entry name" value="Aminomethyltransferase beta-barrel domain"/>
    <property type="match status" value="1"/>
</dbReference>
<dbReference type="SUPFAM" id="SSF103025">
    <property type="entry name" value="Folate-binding domain"/>
    <property type="match status" value="1"/>
</dbReference>
<comment type="function">
    <text evidence="1">The glycine cleavage system catalyzes the degradation of glycine.</text>
</comment>
<comment type="catalytic activity">
    <reaction evidence="1">
        <text>N(6)-[(R)-S(8)-aminomethyldihydrolipoyl]-L-lysyl-[protein] + (6S)-5,6,7,8-tetrahydrofolate = N(6)-[(R)-dihydrolipoyl]-L-lysyl-[protein] + (6R)-5,10-methylene-5,6,7,8-tetrahydrofolate + NH4(+)</text>
        <dbReference type="Rhea" id="RHEA:16945"/>
        <dbReference type="Rhea" id="RHEA-COMP:10475"/>
        <dbReference type="Rhea" id="RHEA-COMP:10492"/>
        <dbReference type="ChEBI" id="CHEBI:15636"/>
        <dbReference type="ChEBI" id="CHEBI:28938"/>
        <dbReference type="ChEBI" id="CHEBI:57453"/>
        <dbReference type="ChEBI" id="CHEBI:83100"/>
        <dbReference type="ChEBI" id="CHEBI:83143"/>
        <dbReference type="EC" id="2.1.2.10"/>
    </reaction>
</comment>
<comment type="subunit">
    <text evidence="1">The glycine cleavage system is composed of four proteins: P, T, L and H.</text>
</comment>
<comment type="similarity">
    <text evidence="1">Belongs to the GcvT family.</text>
</comment>
<evidence type="ECO:0000255" key="1">
    <source>
        <dbReference type="HAMAP-Rule" id="MF_00259"/>
    </source>
</evidence>
<reference key="1">
    <citation type="journal article" date="2006" name="Appl. Environ. Microbiol.">
        <title>Complete genome sequence of the marine, chemolithoautotrophic, ammonia-oxidizing bacterium Nitrosococcus oceani ATCC 19707.</title>
        <authorList>
            <person name="Klotz M.G."/>
            <person name="Arp D.J."/>
            <person name="Chain P.S.G."/>
            <person name="El-Sheikh A.F."/>
            <person name="Hauser L.J."/>
            <person name="Hommes N.G."/>
            <person name="Larimer F.W."/>
            <person name="Malfatti S.A."/>
            <person name="Norton J.M."/>
            <person name="Poret-Peterson A.T."/>
            <person name="Vergez L.M."/>
            <person name="Ward B.B."/>
        </authorList>
    </citation>
    <scope>NUCLEOTIDE SEQUENCE [LARGE SCALE GENOMIC DNA]</scope>
    <source>
        <strain>ATCC 19707 / BCRC 17464 / JCM 30415 / NCIMB 11848 / C-107</strain>
    </source>
</reference>